<proteinExistence type="inferred from homology"/>
<dbReference type="EC" id="4.2.1.20" evidence="1"/>
<dbReference type="EMBL" id="CP000563">
    <property type="protein sequence ID" value="ABN62193.1"/>
    <property type="molecule type" value="Genomic_DNA"/>
</dbReference>
<dbReference type="RefSeq" id="WP_011847149.1">
    <property type="nucleotide sequence ID" value="NC_009052.1"/>
</dbReference>
<dbReference type="SMR" id="A3D630"/>
<dbReference type="STRING" id="325240.Sbal_2705"/>
<dbReference type="KEGG" id="sbl:Sbal_2705"/>
<dbReference type="HOGENOM" id="CLU_016734_3_1_6"/>
<dbReference type="OrthoDB" id="9766131at2"/>
<dbReference type="UniPathway" id="UPA00035">
    <property type="reaction ID" value="UER00044"/>
</dbReference>
<dbReference type="Proteomes" id="UP000001557">
    <property type="component" value="Chromosome"/>
</dbReference>
<dbReference type="GO" id="GO:0005737">
    <property type="term" value="C:cytoplasm"/>
    <property type="evidence" value="ECO:0007669"/>
    <property type="project" value="TreeGrafter"/>
</dbReference>
<dbReference type="GO" id="GO:0004834">
    <property type="term" value="F:tryptophan synthase activity"/>
    <property type="evidence" value="ECO:0007669"/>
    <property type="project" value="UniProtKB-UniRule"/>
</dbReference>
<dbReference type="CDD" id="cd06446">
    <property type="entry name" value="Trp-synth_B"/>
    <property type="match status" value="1"/>
</dbReference>
<dbReference type="FunFam" id="3.40.50.1100:FF:000001">
    <property type="entry name" value="Tryptophan synthase beta chain"/>
    <property type="match status" value="1"/>
</dbReference>
<dbReference type="FunFam" id="3.40.50.1100:FF:000004">
    <property type="entry name" value="Tryptophan synthase beta chain"/>
    <property type="match status" value="1"/>
</dbReference>
<dbReference type="Gene3D" id="3.40.50.1100">
    <property type="match status" value="2"/>
</dbReference>
<dbReference type="HAMAP" id="MF_00133">
    <property type="entry name" value="Trp_synth_beta"/>
    <property type="match status" value="1"/>
</dbReference>
<dbReference type="InterPro" id="IPR006653">
    <property type="entry name" value="Trp_synth_b_CS"/>
</dbReference>
<dbReference type="InterPro" id="IPR006654">
    <property type="entry name" value="Trp_synth_beta"/>
</dbReference>
<dbReference type="InterPro" id="IPR023026">
    <property type="entry name" value="Trp_synth_beta/beta-like"/>
</dbReference>
<dbReference type="InterPro" id="IPR001926">
    <property type="entry name" value="TrpB-like_PALP"/>
</dbReference>
<dbReference type="InterPro" id="IPR036052">
    <property type="entry name" value="TrpB-like_PALP_sf"/>
</dbReference>
<dbReference type="NCBIfam" id="TIGR00263">
    <property type="entry name" value="trpB"/>
    <property type="match status" value="1"/>
</dbReference>
<dbReference type="PANTHER" id="PTHR48077:SF3">
    <property type="entry name" value="TRYPTOPHAN SYNTHASE"/>
    <property type="match status" value="1"/>
</dbReference>
<dbReference type="PANTHER" id="PTHR48077">
    <property type="entry name" value="TRYPTOPHAN SYNTHASE-RELATED"/>
    <property type="match status" value="1"/>
</dbReference>
<dbReference type="Pfam" id="PF00291">
    <property type="entry name" value="PALP"/>
    <property type="match status" value="1"/>
</dbReference>
<dbReference type="PIRSF" id="PIRSF001413">
    <property type="entry name" value="Trp_syn_beta"/>
    <property type="match status" value="1"/>
</dbReference>
<dbReference type="SUPFAM" id="SSF53686">
    <property type="entry name" value="Tryptophan synthase beta subunit-like PLP-dependent enzymes"/>
    <property type="match status" value="1"/>
</dbReference>
<dbReference type="PROSITE" id="PS00168">
    <property type="entry name" value="TRP_SYNTHASE_BETA"/>
    <property type="match status" value="1"/>
</dbReference>
<evidence type="ECO:0000255" key="1">
    <source>
        <dbReference type="HAMAP-Rule" id="MF_00133"/>
    </source>
</evidence>
<reference key="1">
    <citation type="submission" date="2007-02" db="EMBL/GenBank/DDBJ databases">
        <title>Complete sequence of chromosome of Shewanella baltica OS155.</title>
        <authorList>
            <consortium name="US DOE Joint Genome Institute"/>
            <person name="Copeland A."/>
            <person name="Lucas S."/>
            <person name="Lapidus A."/>
            <person name="Barry K."/>
            <person name="Detter J.C."/>
            <person name="Glavina del Rio T."/>
            <person name="Hammon N."/>
            <person name="Israni S."/>
            <person name="Dalin E."/>
            <person name="Tice H."/>
            <person name="Pitluck S."/>
            <person name="Sims D.R."/>
            <person name="Brettin T."/>
            <person name="Bruce D."/>
            <person name="Han C."/>
            <person name="Tapia R."/>
            <person name="Brainard J."/>
            <person name="Schmutz J."/>
            <person name="Larimer F."/>
            <person name="Land M."/>
            <person name="Hauser L."/>
            <person name="Kyrpides N."/>
            <person name="Mikhailova N."/>
            <person name="Brettar I."/>
            <person name="Klappenbach J."/>
            <person name="Konstantinidis K."/>
            <person name="Rodrigues J."/>
            <person name="Tiedje J."/>
            <person name="Richardson P."/>
        </authorList>
    </citation>
    <scope>NUCLEOTIDE SEQUENCE [LARGE SCALE GENOMIC DNA]</scope>
    <source>
        <strain>OS155 / ATCC BAA-1091</strain>
    </source>
</reference>
<comment type="function">
    <text evidence="1">The beta subunit is responsible for the synthesis of L-tryptophan from indole and L-serine.</text>
</comment>
<comment type="catalytic activity">
    <reaction evidence="1">
        <text>(1S,2R)-1-C-(indol-3-yl)glycerol 3-phosphate + L-serine = D-glyceraldehyde 3-phosphate + L-tryptophan + H2O</text>
        <dbReference type="Rhea" id="RHEA:10532"/>
        <dbReference type="ChEBI" id="CHEBI:15377"/>
        <dbReference type="ChEBI" id="CHEBI:33384"/>
        <dbReference type="ChEBI" id="CHEBI:57912"/>
        <dbReference type="ChEBI" id="CHEBI:58866"/>
        <dbReference type="ChEBI" id="CHEBI:59776"/>
        <dbReference type="EC" id="4.2.1.20"/>
    </reaction>
</comment>
<comment type="cofactor">
    <cofactor evidence="1">
        <name>pyridoxal 5'-phosphate</name>
        <dbReference type="ChEBI" id="CHEBI:597326"/>
    </cofactor>
</comment>
<comment type="pathway">
    <text evidence="1">Amino-acid biosynthesis; L-tryptophan biosynthesis; L-tryptophan from chorismate: step 5/5.</text>
</comment>
<comment type="subunit">
    <text evidence="1">Tetramer of two alpha and two beta chains.</text>
</comment>
<comment type="similarity">
    <text evidence="1">Belongs to the TrpB family.</text>
</comment>
<gene>
    <name evidence="1" type="primary">trpB</name>
    <name type="ordered locus">Sbal_2705</name>
</gene>
<name>TRPB_SHEB5</name>
<keyword id="KW-0028">Amino-acid biosynthesis</keyword>
<keyword id="KW-0057">Aromatic amino acid biosynthesis</keyword>
<keyword id="KW-0456">Lyase</keyword>
<keyword id="KW-0663">Pyridoxal phosphate</keyword>
<keyword id="KW-1185">Reference proteome</keyword>
<keyword id="KW-0822">Tryptophan biosynthesis</keyword>
<feature type="chain" id="PRO_1000018386" description="Tryptophan synthase beta chain">
    <location>
        <begin position="1"/>
        <end position="396"/>
    </location>
</feature>
<feature type="modified residue" description="N6-(pyridoxal phosphate)lysine" evidence="1">
    <location>
        <position position="88"/>
    </location>
</feature>
<accession>A3D630</accession>
<organism>
    <name type="scientific">Shewanella baltica (strain OS155 / ATCC BAA-1091)</name>
    <dbReference type="NCBI Taxonomy" id="325240"/>
    <lineage>
        <taxon>Bacteria</taxon>
        <taxon>Pseudomonadati</taxon>
        <taxon>Pseudomonadota</taxon>
        <taxon>Gammaproteobacteria</taxon>
        <taxon>Alteromonadales</taxon>
        <taxon>Shewanellaceae</taxon>
        <taxon>Shewanella</taxon>
    </lineage>
</organism>
<protein>
    <recommendedName>
        <fullName evidence="1">Tryptophan synthase beta chain</fullName>
        <ecNumber evidence="1">4.2.1.20</ecNumber>
    </recommendedName>
</protein>
<sequence length="396" mass="42795">MSKLKLNPYFGEYGGMYVPQILVPALKQLETAFVEAQEDDDFKAEFTDLLKNYAGRPTALTLTRNLSPNPMVKIYLKREDLLHGGAHKTNQVLGQALLAKRMGKKEIIAETGAGQHGVATALACALLGLKCKVYMGAKDVARQSPNVFRMRLMGAEVIPVTSGSATLKDACNEAMRDWSGSYEKAHYLLGTAAGPHPFPTIVREFQRIIGEETKKQMLEREGRLPDAVIACVGGGSNAIGMFADFIDEPSVELIGVEPAGKGIDTPMHGAPLKHGKTGIFFGMKAPLMQNSEGQIEESYSISAGLDFPSVGPQHAHLNATGRARYESATDDEALEAFQQLARCEGIIPALESAHAIAYAVKMARECTKETILVVNLSGRGDKDIFTVSDILNGKEV</sequence>